<evidence type="ECO:0000255" key="1">
    <source>
        <dbReference type="HAMAP-Rule" id="MF_01077"/>
    </source>
</evidence>
<dbReference type="EMBL" id="CP000697">
    <property type="protein sequence ID" value="ABQ29450.1"/>
    <property type="molecule type" value="Genomic_DNA"/>
</dbReference>
<dbReference type="SMR" id="A5FV18"/>
<dbReference type="STRING" id="349163.Acry_0222"/>
<dbReference type="KEGG" id="acr:Acry_0222"/>
<dbReference type="eggNOG" id="COG0779">
    <property type="taxonomic scope" value="Bacteria"/>
</dbReference>
<dbReference type="HOGENOM" id="CLU_070525_0_1_5"/>
<dbReference type="Proteomes" id="UP000000245">
    <property type="component" value="Chromosome"/>
</dbReference>
<dbReference type="GO" id="GO:0005829">
    <property type="term" value="C:cytosol"/>
    <property type="evidence" value="ECO:0007669"/>
    <property type="project" value="TreeGrafter"/>
</dbReference>
<dbReference type="GO" id="GO:0000028">
    <property type="term" value="P:ribosomal small subunit assembly"/>
    <property type="evidence" value="ECO:0007669"/>
    <property type="project" value="TreeGrafter"/>
</dbReference>
<dbReference type="GO" id="GO:0006412">
    <property type="term" value="P:translation"/>
    <property type="evidence" value="ECO:0007669"/>
    <property type="project" value="TreeGrafter"/>
</dbReference>
<dbReference type="CDD" id="cd01734">
    <property type="entry name" value="YlxS_C"/>
    <property type="match status" value="1"/>
</dbReference>
<dbReference type="Gene3D" id="3.30.300.70">
    <property type="entry name" value="RimP-like superfamily, N-terminal"/>
    <property type="match status" value="1"/>
</dbReference>
<dbReference type="HAMAP" id="MF_01077">
    <property type="entry name" value="RimP"/>
    <property type="match status" value="1"/>
</dbReference>
<dbReference type="InterPro" id="IPR003728">
    <property type="entry name" value="Ribosome_maturation_RimP"/>
</dbReference>
<dbReference type="InterPro" id="IPR028998">
    <property type="entry name" value="RimP_C"/>
</dbReference>
<dbReference type="InterPro" id="IPR036847">
    <property type="entry name" value="RimP_C_sf"/>
</dbReference>
<dbReference type="InterPro" id="IPR028989">
    <property type="entry name" value="RimP_N"/>
</dbReference>
<dbReference type="InterPro" id="IPR035956">
    <property type="entry name" value="RimP_N_sf"/>
</dbReference>
<dbReference type="NCBIfam" id="NF000932">
    <property type="entry name" value="PRK00092.2-5"/>
    <property type="match status" value="1"/>
</dbReference>
<dbReference type="PANTHER" id="PTHR33867">
    <property type="entry name" value="RIBOSOME MATURATION FACTOR RIMP"/>
    <property type="match status" value="1"/>
</dbReference>
<dbReference type="PANTHER" id="PTHR33867:SF1">
    <property type="entry name" value="RIBOSOME MATURATION FACTOR RIMP"/>
    <property type="match status" value="1"/>
</dbReference>
<dbReference type="Pfam" id="PF17384">
    <property type="entry name" value="DUF150_C"/>
    <property type="match status" value="1"/>
</dbReference>
<dbReference type="Pfam" id="PF02576">
    <property type="entry name" value="RimP_N"/>
    <property type="match status" value="1"/>
</dbReference>
<dbReference type="SUPFAM" id="SSF74942">
    <property type="entry name" value="YhbC-like, C-terminal domain"/>
    <property type="match status" value="1"/>
</dbReference>
<dbReference type="SUPFAM" id="SSF75420">
    <property type="entry name" value="YhbC-like, N-terminal domain"/>
    <property type="match status" value="1"/>
</dbReference>
<feature type="chain" id="PRO_0000384584" description="Ribosome maturation factor RimP">
    <location>
        <begin position="1"/>
        <end position="201"/>
    </location>
</feature>
<protein>
    <recommendedName>
        <fullName evidence="1">Ribosome maturation factor RimP</fullName>
    </recommendedName>
</protein>
<gene>
    <name evidence="1" type="primary">rimP</name>
    <name type="ordered locus">Acry_0222</name>
</gene>
<keyword id="KW-0963">Cytoplasm</keyword>
<keyword id="KW-1185">Reference proteome</keyword>
<keyword id="KW-0690">Ribosome biogenesis</keyword>
<organism>
    <name type="scientific">Acidiphilium cryptum (strain JF-5)</name>
    <dbReference type="NCBI Taxonomy" id="349163"/>
    <lineage>
        <taxon>Bacteria</taxon>
        <taxon>Pseudomonadati</taxon>
        <taxon>Pseudomonadota</taxon>
        <taxon>Alphaproteobacteria</taxon>
        <taxon>Acetobacterales</taxon>
        <taxon>Acidocellaceae</taxon>
        <taxon>Acidiphilium</taxon>
    </lineage>
</organism>
<proteinExistence type="inferred from homology"/>
<sequence length="201" mass="21797">MQINLQTDGGGPNRPPFLLPGYPESFPVNDTRPQHTGLEGRIAELIAPGLESIGYELVRVAIMGKQTPTVQIMADRADQTPLSLDDCERISHLVSAVLDVDDPISSAWTLEVSSAGIDRPLTRVKDWNRYAGHLARIDLDVPTASGRKRLTGTVLGADEAQARVKLDSGETVDLPHAHIRRAKLVLTEELIKATETPPAAN</sequence>
<name>RIMP_ACICJ</name>
<reference key="1">
    <citation type="submission" date="2007-05" db="EMBL/GenBank/DDBJ databases">
        <title>Complete sequence of chromosome of Acidiphilium cryptum JF-5.</title>
        <authorList>
            <consortium name="US DOE Joint Genome Institute"/>
            <person name="Copeland A."/>
            <person name="Lucas S."/>
            <person name="Lapidus A."/>
            <person name="Barry K."/>
            <person name="Detter J.C."/>
            <person name="Glavina del Rio T."/>
            <person name="Hammon N."/>
            <person name="Israni S."/>
            <person name="Dalin E."/>
            <person name="Tice H."/>
            <person name="Pitluck S."/>
            <person name="Sims D."/>
            <person name="Brettin T."/>
            <person name="Bruce D."/>
            <person name="Han C."/>
            <person name="Schmutz J."/>
            <person name="Larimer F."/>
            <person name="Land M."/>
            <person name="Hauser L."/>
            <person name="Kyrpides N."/>
            <person name="Kim E."/>
            <person name="Magnuson T."/>
            <person name="Richardson P."/>
        </authorList>
    </citation>
    <scope>NUCLEOTIDE SEQUENCE [LARGE SCALE GENOMIC DNA]</scope>
    <source>
        <strain>JF-5</strain>
    </source>
</reference>
<comment type="function">
    <text evidence="1">Required for maturation of 30S ribosomal subunits.</text>
</comment>
<comment type="subcellular location">
    <subcellularLocation>
        <location evidence="1">Cytoplasm</location>
    </subcellularLocation>
</comment>
<comment type="similarity">
    <text evidence="1">Belongs to the RimP family.</text>
</comment>
<accession>A5FV18</accession>